<sequence length="400" mass="43195">MTQRLFTSESVTEGHPDKICDAISDSILDAMLAVDPDSHVAVETVVTTGQVHVVGEVRCRGYVEIPSLVRQTLRNIGFLSSDMGFDGATCGVSVSIGEQSLEIGAGVDTALEARDGAEVEDDDRAGAGDQGLMFGYATNETPEYMPLPIALAHRLARRLTAVRKDDIVPHLRPDGKTQVTLAYNDDNNPIRIDTIVISTQHDPGVSRQWLEEQLRTNVITPVIKDAGVENLVDDELTVLINPSGSFVVGGPMGDAGLTGRKIIVDTYGGMARHGGGAFSGKDPSKVDRSAAYAMRWVAKNIVAAGLADRCEVQVAYAIGRANPVGLYVETFGTEKEPISAIQEAVQKVFDLRPAAIIRELDLKRPIYAQTAAYGHFGRTDLDLPWERLDRVDDLKAAISR</sequence>
<organism>
    <name type="scientific">Corynebacterium kroppenstedtii (strain DSM 44385 / JCM 11950 / CIP 105744 / CCUG 35717)</name>
    <dbReference type="NCBI Taxonomy" id="645127"/>
    <lineage>
        <taxon>Bacteria</taxon>
        <taxon>Bacillati</taxon>
        <taxon>Actinomycetota</taxon>
        <taxon>Actinomycetes</taxon>
        <taxon>Mycobacteriales</taxon>
        <taxon>Corynebacteriaceae</taxon>
        <taxon>Corynebacterium</taxon>
    </lineage>
</organism>
<reference key="1">
    <citation type="journal article" date="2008" name="J. Biotechnol.">
        <title>Ultrafast pyrosequencing of Corynebacterium kroppenstedtii DSM44385 revealed insights into the physiology of a lipophilic corynebacterium that lacks mycolic acids.</title>
        <authorList>
            <person name="Tauch A."/>
            <person name="Schneider J."/>
            <person name="Szczepanowski R."/>
            <person name="Tilker A."/>
            <person name="Viehoever P."/>
            <person name="Gartemann K.-H."/>
            <person name="Arnold W."/>
            <person name="Blom J."/>
            <person name="Brinkrolf K."/>
            <person name="Brune I."/>
            <person name="Goetker S."/>
            <person name="Weisshaar B."/>
            <person name="Goesmann A."/>
            <person name="Droege M."/>
            <person name="Puehler A."/>
        </authorList>
    </citation>
    <scope>NUCLEOTIDE SEQUENCE [LARGE SCALE GENOMIC DNA]</scope>
    <source>
        <strain>DSM 44385 / JCM 11950 / CIP 105744 / CCUG 35717</strain>
    </source>
</reference>
<evidence type="ECO:0000255" key="1">
    <source>
        <dbReference type="HAMAP-Rule" id="MF_00086"/>
    </source>
</evidence>
<proteinExistence type="inferred from homology"/>
<accession>C4LIT2</accession>
<name>METK_CORK4</name>
<protein>
    <recommendedName>
        <fullName evidence="1">S-adenosylmethionine synthase</fullName>
        <shortName evidence="1">AdoMet synthase</shortName>
        <ecNumber evidence="1">2.5.1.6</ecNumber>
    </recommendedName>
    <alternativeName>
        <fullName evidence="1">MAT</fullName>
    </alternativeName>
    <alternativeName>
        <fullName evidence="1">Methionine adenosyltransferase</fullName>
    </alternativeName>
</protein>
<keyword id="KW-0067">ATP-binding</keyword>
<keyword id="KW-0963">Cytoplasm</keyword>
<keyword id="KW-0460">Magnesium</keyword>
<keyword id="KW-0479">Metal-binding</keyword>
<keyword id="KW-0547">Nucleotide-binding</keyword>
<keyword id="KW-0554">One-carbon metabolism</keyword>
<keyword id="KW-0630">Potassium</keyword>
<keyword id="KW-1185">Reference proteome</keyword>
<keyword id="KW-0808">Transferase</keyword>
<feature type="chain" id="PRO_1000202612" description="S-adenosylmethionine synthase">
    <location>
        <begin position="1"/>
        <end position="400"/>
    </location>
</feature>
<feature type="region of interest" description="Flexible loop" evidence="1">
    <location>
        <begin position="99"/>
        <end position="109"/>
    </location>
</feature>
<feature type="binding site" description="in other chain" evidence="1">
    <location>
        <position position="15"/>
    </location>
    <ligand>
        <name>ATP</name>
        <dbReference type="ChEBI" id="CHEBI:30616"/>
        <note>ligand shared between two neighboring subunits</note>
    </ligand>
</feature>
<feature type="binding site" evidence="1">
    <location>
        <position position="17"/>
    </location>
    <ligand>
        <name>Mg(2+)</name>
        <dbReference type="ChEBI" id="CHEBI:18420"/>
    </ligand>
</feature>
<feature type="binding site" evidence="1">
    <location>
        <position position="43"/>
    </location>
    <ligand>
        <name>K(+)</name>
        <dbReference type="ChEBI" id="CHEBI:29103"/>
    </ligand>
</feature>
<feature type="binding site" description="in other chain" evidence="1">
    <location>
        <position position="56"/>
    </location>
    <ligand>
        <name>L-methionine</name>
        <dbReference type="ChEBI" id="CHEBI:57844"/>
        <note>ligand shared between two neighboring subunits</note>
    </ligand>
</feature>
<feature type="binding site" description="in other chain" evidence="1">
    <location>
        <position position="99"/>
    </location>
    <ligand>
        <name>L-methionine</name>
        <dbReference type="ChEBI" id="CHEBI:57844"/>
        <note>ligand shared between two neighboring subunits</note>
    </ligand>
</feature>
<feature type="binding site" description="in other chain" evidence="1">
    <location>
        <begin position="174"/>
        <end position="176"/>
    </location>
    <ligand>
        <name>ATP</name>
        <dbReference type="ChEBI" id="CHEBI:30616"/>
        <note>ligand shared between two neighboring subunits</note>
    </ligand>
</feature>
<feature type="binding site" evidence="1">
    <location>
        <position position="254"/>
    </location>
    <ligand>
        <name>ATP</name>
        <dbReference type="ChEBI" id="CHEBI:30616"/>
        <note>ligand shared between two neighboring subunits</note>
    </ligand>
</feature>
<feature type="binding site" evidence="1">
    <location>
        <position position="254"/>
    </location>
    <ligand>
        <name>L-methionine</name>
        <dbReference type="ChEBI" id="CHEBI:57844"/>
        <note>ligand shared between two neighboring subunits</note>
    </ligand>
</feature>
<feature type="binding site" description="in other chain" evidence="1">
    <location>
        <begin position="260"/>
        <end position="261"/>
    </location>
    <ligand>
        <name>ATP</name>
        <dbReference type="ChEBI" id="CHEBI:30616"/>
        <note>ligand shared between two neighboring subunits</note>
    </ligand>
</feature>
<feature type="binding site" evidence="1">
    <location>
        <position position="277"/>
    </location>
    <ligand>
        <name>ATP</name>
        <dbReference type="ChEBI" id="CHEBI:30616"/>
        <note>ligand shared between two neighboring subunits</note>
    </ligand>
</feature>
<feature type="binding site" evidence="1">
    <location>
        <position position="281"/>
    </location>
    <ligand>
        <name>ATP</name>
        <dbReference type="ChEBI" id="CHEBI:30616"/>
        <note>ligand shared between two neighboring subunits</note>
    </ligand>
</feature>
<feature type="binding site" description="in other chain" evidence="1">
    <location>
        <position position="285"/>
    </location>
    <ligand>
        <name>L-methionine</name>
        <dbReference type="ChEBI" id="CHEBI:57844"/>
        <note>ligand shared between two neighboring subunits</note>
    </ligand>
</feature>
<gene>
    <name evidence="1" type="primary">metK</name>
    <name type="ordered locus">ckrop_0984</name>
</gene>
<comment type="function">
    <text evidence="1">Catalyzes the formation of S-adenosylmethionine (AdoMet) from methionine and ATP. The overall synthetic reaction is composed of two sequential steps, AdoMet formation and the subsequent tripolyphosphate hydrolysis which occurs prior to release of AdoMet from the enzyme.</text>
</comment>
<comment type="catalytic activity">
    <reaction evidence="1">
        <text>L-methionine + ATP + H2O = S-adenosyl-L-methionine + phosphate + diphosphate</text>
        <dbReference type="Rhea" id="RHEA:21080"/>
        <dbReference type="ChEBI" id="CHEBI:15377"/>
        <dbReference type="ChEBI" id="CHEBI:30616"/>
        <dbReference type="ChEBI" id="CHEBI:33019"/>
        <dbReference type="ChEBI" id="CHEBI:43474"/>
        <dbReference type="ChEBI" id="CHEBI:57844"/>
        <dbReference type="ChEBI" id="CHEBI:59789"/>
        <dbReference type="EC" id="2.5.1.6"/>
    </reaction>
</comment>
<comment type="cofactor">
    <cofactor evidence="1">
        <name>Mg(2+)</name>
        <dbReference type="ChEBI" id="CHEBI:18420"/>
    </cofactor>
    <text evidence="1">Binds 2 divalent ions per subunit.</text>
</comment>
<comment type="cofactor">
    <cofactor evidence="1">
        <name>K(+)</name>
        <dbReference type="ChEBI" id="CHEBI:29103"/>
    </cofactor>
    <text evidence="1">Binds 1 potassium ion per subunit.</text>
</comment>
<comment type="pathway">
    <text evidence="1">Amino-acid biosynthesis; S-adenosyl-L-methionine biosynthesis; S-adenosyl-L-methionine from L-methionine: step 1/1.</text>
</comment>
<comment type="subunit">
    <text evidence="1">Homotetramer; dimer of dimers.</text>
</comment>
<comment type="subcellular location">
    <subcellularLocation>
        <location evidence="1">Cytoplasm</location>
    </subcellularLocation>
</comment>
<comment type="similarity">
    <text evidence="1">Belongs to the AdoMet synthase family.</text>
</comment>
<dbReference type="EC" id="2.5.1.6" evidence="1"/>
<dbReference type="EMBL" id="CP001620">
    <property type="protein sequence ID" value="ACR17737.1"/>
    <property type="molecule type" value="Genomic_DNA"/>
</dbReference>
<dbReference type="RefSeq" id="WP_012731624.1">
    <property type="nucleotide sequence ID" value="NC_012704.1"/>
</dbReference>
<dbReference type="SMR" id="C4LIT2"/>
<dbReference type="STRING" id="645127.ckrop_0984"/>
<dbReference type="KEGG" id="ckp:ckrop_0984"/>
<dbReference type="eggNOG" id="COG0192">
    <property type="taxonomic scope" value="Bacteria"/>
</dbReference>
<dbReference type="HOGENOM" id="CLU_041802_1_1_11"/>
<dbReference type="OrthoDB" id="9801686at2"/>
<dbReference type="UniPathway" id="UPA00315">
    <property type="reaction ID" value="UER00080"/>
</dbReference>
<dbReference type="Proteomes" id="UP000001473">
    <property type="component" value="Chromosome"/>
</dbReference>
<dbReference type="GO" id="GO:0005737">
    <property type="term" value="C:cytoplasm"/>
    <property type="evidence" value="ECO:0007669"/>
    <property type="project" value="UniProtKB-SubCell"/>
</dbReference>
<dbReference type="GO" id="GO:0005524">
    <property type="term" value="F:ATP binding"/>
    <property type="evidence" value="ECO:0007669"/>
    <property type="project" value="UniProtKB-UniRule"/>
</dbReference>
<dbReference type="GO" id="GO:0000287">
    <property type="term" value="F:magnesium ion binding"/>
    <property type="evidence" value="ECO:0007669"/>
    <property type="project" value="UniProtKB-UniRule"/>
</dbReference>
<dbReference type="GO" id="GO:0004478">
    <property type="term" value="F:methionine adenosyltransferase activity"/>
    <property type="evidence" value="ECO:0007669"/>
    <property type="project" value="UniProtKB-UniRule"/>
</dbReference>
<dbReference type="GO" id="GO:0006730">
    <property type="term" value="P:one-carbon metabolic process"/>
    <property type="evidence" value="ECO:0007669"/>
    <property type="project" value="UniProtKB-KW"/>
</dbReference>
<dbReference type="GO" id="GO:0006556">
    <property type="term" value="P:S-adenosylmethionine biosynthetic process"/>
    <property type="evidence" value="ECO:0007669"/>
    <property type="project" value="UniProtKB-UniRule"/>
</dbReference>
<dbReference type="CDD" id="cd18079">
    <property type="entry name" value="S-AdoMet_synt"/>
    <property type="match status" value="1"/>
</dbReference>
<dbReference type="FunFam" id="3.30.300.10:FF:000003">
    <property type="entry name" value="S-adenosylmethionine synthase"/>
    <property type="match status" value="1"/>
</dbReference>
<dbReference type="Gene3D" id="3.30.300.10">
    <property type="match status" value="3"/>
</dbReference>
<dbReference type="HAMAP" id="MF_00086">
    <property type="entry name" value="S_AdoMet_synth1"/>
    <property type="match status" value="1"/>
</dbReference>
<dbReference type="InterPro" id="IPR022631">
    <property type="entry name" value="ADOMET_SYNTHASE_CS"/>
</dbReference>
<dbReference type="InterPro" id="IPR022630">
    <property type="entry name" value="S-AdoMet_synt_C"/>
</dbReference>
<dbReference type="InterPro" id="IPR022629">
    <property type="entry name" value="S-AdoMet_synt_central"/>
</dbReference>
<dbReference type="InterPro" id="IPR022628">
    <property type="entry name" value="S-AdoMet_synt_N"/>
</dbReference>
<dbReference type="InterPro" id="IPR002133">
    <property type="entry name" value="S-AdoMet_synthetase"/>
</dbReference>
<dbReference type="InterPro" id="IPR022636">
    <property type="entry name" value="S-AdoMet_synthetase_sfam"/>
</dbReference>
<dbReference type="NCBIfam" id="TIGR01034">
    <property type="entry name" value="metK"/>
    <property type="match status" value="1"/>
</dbReference>
<dbReference type="PANTHER" id="PTHR11964">
    <property type="entry name" value="S-ADENOSYLMETHIONINE SYNTHETASE"/>
    <property type="match status" value="1"/>
</dbReference>
<dbReference type="Pfam" id="PF02773">
    <property type="entry name" value="S-AdoMet_synt_C"/>
    <property type="match status" value="1"/>
</dbReference>
<dbReference type="Pfam" id="PF02772">
    <property type="entry name" value="S-AdoMet_synt_M"/>
    <property type="match status" value="1"/>
</dbReference>
<dbReference type="Pfam" id="PF00438">
    <property type="entry name" value="S-AdoMet_synt_N"/>
    <property type="match status" value="1"/>
</dbReference>
<dbReference type="PIRSF" id="PIRSF000497">
    <property type="entry name" value="MAT"/>
    <property type="match status" value="1"/>
</dbReference>
<dbReference type="SUPFAM" id="SSF55973">
    <property type="entry name" value="S-adenosylmethionine synthetase"/>
    <property type="match status" value="3"/>
</dbReference>
<dbReference type="PROSITE" id="PS00376">
    <property type="entry name" value="ADOMET_SYNTHASE_1"/>
    <property type="match status" value="1"/>
</dbReference>
<dbReference type="PROSITE" id="PS00377">
    <property type="entry name" value="ADOMET_SYNTHASE_2"/>
    <property type="match status" value="1"/>
</dbReference>